<dbReference type="EMBL" id="BA000030">
    <property type="protein sequence ID" value="BAC73340.1"/>
    <property type="status" value="ALT_INIT"/>
    <property type="molecule type" value="Genomic_DNA"/>
</dbReference>
<dbReference type="RefSeq" id="WP_010987030.1">
    <property type="nucleotide sequence ID" value="NZ_JZJK01000057.1"/>
</dbReference>
<dbReference type="SMR" id="Q82BS6"/>
<dbReference type="GeneID" id="41542716"/>
<dbReference type="KEGG" id="sma:SAVERM_5628"/>
<dbReference type="eggNOG" id="COG1381">
    <property type="taxonomic scope" value="Bacteria"/>
</dbReference>
<dbReference type="HOGENOM" id="CLU_066632_1_1_11"/>
<dbReference type="Proteomes" id="UP000000428">
    <property type="component" value="Chromosome"/>
</dbReference>
<dbReference type="GO" id="GO:0043590">
    <property type="term" value="C:bacterial nucleoid"/>
    <property type="evidence" value="ECO:0007669"/>
    <property type="project" value="TreeGrafter"/>
</dbReference>
<dbReference type="GO" id="GO:0006310">
    <property type="term" value="P:DNA recombination"/>
    <property type="evidence" value="ECO:0007669"/>
    <property type="project" value="UniProtKB-UniRule"/>
</dbReference>
<dbReference type="GO" id="GO:0006302">
    <property type="term" value="P:double-strand break repair"/>
    <property type="evidence" value="ECO:0007669"/>
    <property type="project" value="TreeGrafter"/>
</dbReference>
<dbReference type="Gene3D" id="2.40.50.140">
    <property type="entry name" value="Nucleic acid-binding proteins"/>
    <property type="match status" value="1"/>
</dbReference>
<dbReference type="Gene3D" id="1.20.1440.120">
    <property type="entry name" value="Recombination protein O, C-terminal domain"/>
    <property type="match status" value="1"/>
</dbReference>
<dbReference type="HAMAP" id="MF_00201">
    <property type="entry name" value="RecO"/>
    <property type="match status" value="1"/>
</dbReference>
<dbReference type="InterPro" id="IPR037278">
    <property type="entry name" value="ARFGAP/RecO"/>
</dbReference>
<dbReference type="InterPro" id="IPR022572">
    <property type="entry name" value="DNA_rep/recomb_RecO_N"/>
</dbReference>
<dbReference type="InterPro" id="IPR012340">
    <property type="entry name" value="NA-bd_OB-fold"/>
</dbReference>
<dbReference type="InterPro" id="IPR003717">
    <property type="entry name" value="RecO"/>
</dbReference>
<dbReference type="InterPro" id="IPR042242">
    <property type="entry name" value="RecO_C"/>
</dbReference>
<dbReference type="NCBIfam" id="TIGR00613">
    <property type="entry name" value="reco"/>
    <property type="match status" value="1"/>
</dbReference>
<dbReference type="PANTHER" id="PTHR33991">
    <property type="entry name" value="DNA REPAIR PROTEIN RECO"/>
    <property type="match status" value="1"/>
</dbReference>
<dbReference type="PANTHER" id="PTHR33991:SF1">
    <property type="entry name" value="DNA REPAIR PROTEIN RECO"/>
    <property type="match status" value="1"/>
</dbReference>
<dbReference type="Pfam" id="PF02565">
    <property type="entry name" value="RecO_C"/>
    <property type="match status" value="1"/>
</dbReference>
<dbReference type="Pfam" id="PF11967">
    <property type="entry name" value="RecO_N"/>
    <property type="match status" value="1"/>
</dbReference>
<dbReference type="SUPFAM" id="SSF57863">
    <property type="entry name" value="ArfGap/RecO-like zinc finger"/>
    <property type="match status" value="1"/>
</dbReference>
<dbReference type="SUPFAM" id="SSF50249">
    <property type="entry name" value="Nucleic acid-binding proteins"/>
    <property type="match status" value="1"/>
</dbReference>
<evidence type="ECO:0000255" key="1">
    <source>
        <dbReference type="HAMAP-Rule" id="MF_00201"/>
    </source>
</evidence>
<evidence type="ECO:0000305" key="2"/>
<protein>
    <recommendedName>
        <fullName evidence="1">DNA repair protein RecO</fullName>
    </recommendedName>
    <alternativeName>
        <fullName evidence="1">Recombination protein O</fullName>
    </alternativeName>
</protein>
<organism>
    <name type="scientific">Streptomyces avermitilis (strain ATCC 31267 / DSM 46492 / JCM 5070 / NBRC 14893 / NCIMB 12804 / NRRL 8165 / MA-4680)</name>
    <dbReference type="NCBI Taxonomy" id="227882"/>
    <lineage>
        <taxon>Bacteria</taxon>
        <taxon>Bacillati</taxon>
        <taxon>Actinomycetota</taxon>
        <taxon>Actinomycetes</taxon>
        <taxon>Kitasatosporales</taxon>
        <taxon>Streptomycetaceae</taxon>
        <taxon>Streptomyces</taxon>
    </lineage>
</organism>
<accession>Q82BS6</accession>
<name>RECO_STRAW</name>
<feature type="chain" id="PRO_0000205006" description="DNA repair protein RecO">
    <location>
        <begin position="1"/>
        <end position="248"/>
    </location>
</feature>
<proteinExistence type="inferred from homology"/>
<comment type="function">
    <text evidence="1">Involved in DNA repair and RecF pathway recombination.</text>
</comment>
<comment type="similarity">
    <text evidence="1">Belongs to the RecO family.</text>
</comment>
<comment type="sequence caution" evidence="2">
    <conflict type="erroneous initiation">
        <sequence resource="EMBL-CDS" id="BAC73340"/>
    </conflict>
</comment>
<sequence length="248" mass="27007">MSLFRDDGIVLRTQKLGEADRIITLLTRGHGRVRAVARGVRRTKSKFGARLEPFSHVDVQFFSRGSELIGRGLPLCTQSETIAPYGGAIVTDYARYTAGTAMLETAERFTDHEGEPAVQQYLLLVGGLRTLARGEHEPHLVLDAFLLRSLAVNGYAPSFSNCAKCGMPGPNRFFSVAAGGSVCVDCRVPGSVVPSAQALVLLGALLTGDWETADACEPRYVREGSGLVSAYLHWHLERGLRSLRYVEK</sequence>
<reference key="1">
    <citation type="journal article" date="2001" name="Proc. Natl. Acad. Sci. U.S.A.">
        <title>Genome sequence of an industrial microorganism Streptomyces avermitilis: deducing the ability of producing secondary metabolites.</title>
        <authorList>
            <person name="Omura S."/>
            <person name="Ikeda H."/>
            <person name="Ishikawa J."/>
            <person name="Hanamoto A."/>
            <person name="Takahashi C."/>
            <person name="Shinose M."/>
            <person name="Takahashi Y."/>
            <person name="Horikawa H."/>
            <person name="Nakazawa H."/>
            <person name="Osonoe T."/>
            <person name="Kikuchi H."/>
            <person name="Shiba T."/>
            <person name="Sakaki Y."/>
            <person name="Hattori M."/>
        </authorList>
    </citation>
    <scope>NUCLEOTIDE SEQUENCE [LARGE SCALE GENOMIC DNA]</scope>
    <source>
        <strain>ATCC 31267 / DSM 46492 / JCM 5070 / NBRC 14893 / NCIMB 12804 / NRRL 8165 / MA-4680</strain>
    </source>
</reference>
<reference key="2">
    <citation type="journal article" date="2003" name="Nat. Biotechnol.">
        <title>Complete genome sequence and comparative analysis of the industrial microorganism Streptomyces avermitilis.</title>
        <authorList>
            <person name="Ikeda H."/>
            <person name="Ishikawa J."/>
            <person name="Hanamoto A."/>
            <person name="Shinose M."/>
            <person name="Kikuchi H."/>
            <person name="Shiba T."/>
            <person name="Sakaki Y."/>
            <person name="Hattori M."/>
            <person name="Omura S."/>
        </authorList>
    </citation>
    <scope>NUCLEOTIDE SEQUENCE [LARGE SCALE GENOMIC DNA]</scope>
    <source>
        <strain>ATCC 31267 / DSM 46492 / JCM 5070 / NBRC 14893 / NCIMB 12804 / NRRL 8165 / MA-4680</strain>
    </source>
</reference>
<gene>
    <name evidence="1" type="primary">recO</name>
    <name type="ordered locus">SAV_5628</name>
</gene>
<keyword id="KW-0227">DNA damage</keyword>
<keyword id="KW-0233">DNA recombination</keyword>
<keyword id="KW-0234">DNA repair</keyword>
<keyword id="KW-1185">Reference proteome</keyword>